<gene>
    <name type="primary">hssl39</name>
    <name type="ORF">DDB_G0280933</name>
</gene>
<accession>Q54UN0</accession>
<proteinExistence type="inferred from homology"/>
<organism>
    <name type="scientific">Dictyostelium discoideum</name>
    <name type="common">Social amoeba</name>
    <dbReference type="NCBI Taxonomy" id="44689"/>
    <lineage>
        <taxon>Eukaryota</taxon>
        <taxon>Amoebozoa</taxon>
        <taxon>Evosea</taxon>
        <taxon>Eumycetozoa</taxon>
        <taxon>Dictyostelia</taxon>
        <taxon>Dictyosteliales</taxon>
        <taxon>Dictyosteliaceae</taxon>
        <taxon>Dictyostelium</taxon>
    </lineage>
</organism>
<name>HSL39_DICDI</name>
<keyword id="KW-1185">Reference proteome</keyword>
<reference key="1">
    <citation type="journal article" date="2005" name="Nature">
        <title>The genome of the social amoeba Dictyostelium discoideum.</title>
        <authorList>
            <person name="Eichinger L."/>
            <person name="Pachebat J.A."/>
            <person name="Gloeckner G."/>
            <person name="Rajandream M.A."/>
            <person name="Sucgang R."/>
            <person name="Berriman M."/>
            <person name="Song J."/>
            <person name="Olsen R."/>
            <person name="Szafranski K."/>
            <person name="Xu Q."/>
            <person name="Tunggal B."/>
            <person name="Kummerfeld S."/>
            <person name="Madera M."/>
            <person name="Konfortov B.A."/>
            <person name="Rivero F."/>
            <person name="Bankier A.T."/>
            <person name="Lehmann R."/>
            <person name="Hamlin N."/>
            <person name="Davies R."/>
            <person name="Gaudet P."/>
            <person name="Fey P."/>
            <person name="Pilcher K."/>
            <person name="Chen G."/>
            <person name="Saunders D."/>
            <person name="Sodergren E.J."/>
            <person name="Davis P."/>
            <person name="Kerhornou A."/>
            <person name="Nie X."/>
            <person name="Hall N."/>
            <person name="Anjard C."/>
            <person name="Hemphill L."/>
            <person name="Bason N."/>
            <person name="Farbrother P."/>
            <person name="Desany B."/>
            <person name="Just E."/>
            <person name="Morio T."/>
            <person name="Rost R."/>
            <person name="Churcher C.M."/>
            <person name="Cooper J."/>
            <person name="Haydock S."/>
            <person name="van Driessche N."/>
            <person name="Cronin A."/>
            <person name="Goodhead I."/>
            <person name="Muzny D.M."/>
            <person name="Mourier T."/>
            <person name="Pain A."/>
            <person name="Lu M."/>
            <person name="Harper D."/>
            <person name="Lindsay R."/>
            <person name="Hauser H."/>
            <person name="James K.D."/>
            <person name="Quiles M."/>
            <person name="Madan Babu M."/>
            <person name="Saito T."/>
            <person name="Buchrieser C."/>
            <person name="Wardroper A."/>
            <person name="Felder M."/>
            <person name="Thangavelu M."/>
            <person name="Johnson D."/>
            <person name="Knights A."/>
            <person name="Loulseged H."/>
            <person name="Mungall K.L."/>
            <person name="Oliver K."/>
            <person name="Price C."/>
            <person name="Quail M.A."/>
            <person name="Urushihara H."/>
            <person name="Hernandez J."/>
            <person name="Rabbinowitsch E."/>
            <person name="Steffen D."/>
            <person name="Sanders M."/>
            <person name="Ma J."/>
            <person name="Kohara Y."/>
            <person name="Sharp S."/>
            <person name="Simmonds M.N."/>
            <person name="Spiegler S."/>
            <person name="Tivey A."/>
            <person name="Sugano S."/>
            <person name="White B."/>
            <person name="Walker D."/>
            <person name="Woodward J.R."/>
            <person name="Winckler T."/>
            <person name="Tanaka Y."/>
            <person name="Shaulsky G."/>
            <person name="Schleicher M."/>
            <person name="Weinstock G.M."/>
            <person name="Rosenthal A."/>
            <person name="Cox E.C."/>
            <person name="Chisholm R.L."/>
            <person name="Gibbs R.A."/>
            <person name="Loomis W.F."/>
            <person name="Platzer M."/>
            <person name="Kay R.R."/>
            <person name="Williams J.G."/>
            <person name="Dear P.H."/>
            <person name="Noegel A.A."/>
            <person name="Barrell B.G."/>
            <person name="Kuspa A."/>
        </authorList>
    </citation>
    <scope>NUCLEOTIDE SEQUENCE [LARGE SCALE GENOMIC DNA]</scope>
    <source>
        <strain>AX4</strain>
    </source>
</reference>
<sequence length="98" mass="8784">MTLFSSISSMSTSMSGSKSSIASFGSGTSMGSNSIACGGGCGGSGGILGSGLGLGLGLDLTGGSRSRGACGNGGNRGNGNGGMGGGNGSCCGGPCCGI</sequence>
<evidence type="ECO:0000256" key="1">
    <source>
        <dbReference type="SAM" id="MobiDB-lite"/>
    </source>
</evidence>
<evidence type="ECO:0000305" key="2"/>
<dbReference type="EMBL" id="AAFI02000039">
    <property type="protein sequence ID" value="EAL67008.1"/>
    <property type="molecule type" value="Genomic_DNA"/>
</dbReference>
<dbReference type="RefSeq" id="XP_640991.1">
    <property type="nucleotide sequence ID" value="XM_635899.1"/>
</dbReference>
<dbReference type="PaxDb" id="44689-DDB0235350"/>
<dbReference type="EnsemblProtists" id="EAL67008">
    <property type="protein sequence ID" value="EAL67008"/>
    <property type="gene ID" value="DDB_G0280933"/>
</dbReference>
<dbReference type="GeneID" id="8622799"/>
<dbReference type="KEGG" id="ddi:DDB_G0280933"/>
<dbReference type="dictyBase" id="DDB_G0280933"/>
<dbReference type="HOGENOM" id="CLU_181850_0_0_1"/>
<dbReference type="InParanoid" id="Q54UN0"/>
<dbReference type="PRO" id="PR:Q54UN0"/>
<dbReference type="Proteomes" id="UP000002195">
    <property type="component" value="Chromosome 3"/>
</dbReference>
<dbReference type="GO" id="GO:0030587">
    <property type="term" value="P:sorocarp development"/>
    <property type="evidence" value="ECO:0000318"/>
    <property type="project" value="GO_Central"/>
</dbReference>
<dbReference type="InterPro" id="IPR050533">
    <property type="entry name" value="HssA/B-like_chaperone"/>
</dbReference>
<dbReference type="InterPro" id="IPR008455">
    <property type="entry name" value="HssA/B-related"/>
</dbReference>
<dbReference type="PANTHER" id="PTHR31059">
    <property type="entry name" value="HSSA/B-LIKE PROTEIN 1-RELATED-RELATED"/>
    <property type="match status" value="1"/>
</dbReference>
<dbReference type="PANTHER" id="PTHR31059:SF5">
    <property type="entry name" value="HSSA_B-LIKE PROTEIN 1-RELATED"/>
    <property type="match status" value="1"/>
</dbReference>
<dbReference type="Pfam" id="PF05710">
    <property type="entry name" value="Coiled"/>
    <property type="match status" value="1"/>
</dbReference>
<feature type="chain" id="PRO_0000330407" description="HssA/B-like protein 39">
    <location>
        <begin position="1"/>
        <end position="98"/>
    </location>
</feature>
<feature type="region of interest" description="Disordered" evidence="1">
    <location>
        <begin position="1"/>
        <end position="21"/>
    </location>
</feature>
<protein>
    <recommendedName>
        <fullName>HssA/B-like protein 39</fullName>
    </recommendedName>
</protein>
<comment type="similarity">
    <text evidence="2">Belongs to the hssA/B family.</text>
</comment>